<proteinExistence type="evidence at protein level"/>
<reference key="1">
    <citation type="journal article" date="2004" name="Nature">
        <title>Genome sequence of the Brown Norway rat yields insights into mammalian evolution.</title>
        <authorList>
            <person name="Gibbs R.A."/>
            <person name="Weinstock G.M."/>
            <person name="Metzker M.L."/>
            <person name="Muzny D.M."/>
            <person name="Sodergren E.J."/>
            <person name="Scherer S."/>
            <person name="Scott G."/>
            <person name="Steffen D."/>
            <person name="Worley K.C."/>
            <person name="Burch P.E."/>
            <person name="Okwuonu G."/>
            <person name="Hines S."/>
            <person name="Lewis L."/>
            <person name="Deramo C."/>
            <person name="Delgado O."/>
            <person name="Dugan-Rocha S."/>
            <person name="Miner G."/>
            <person name="Morgan M."/>
            <person name="Hawes A."/>
            <person name="Gill R."/>
            <person name="Holt R.A."/>
            <person name="Adams M.D."/>
            <person name="Amanatides P.G."/>
            <person name="Baden-Tillson H."/>
            <person name="Barnstead M."/>
            <person name="Chin S."/>
            <person name="Evans C.A."/>
            <person name="Ferriera S."/>
            <person name="Fosler C."/>
            <person name="Glodek A."/>
            <person name="Gu Z."/>
            <person name="Jennings D."/>
            <person name="Kraft C.L."/>
            <person name="Nguyen T."/>
            <person name="Pfannkoch C.M."/>
            <person name="Sitter C."/>
            <person name="Sutton G.G."/>
            <person name="Venter J.C."/>
            <person name="Woodage T."/>
            <person name="Smith D."/>
            <person name="Lee H.-M."/>
            <person name="Gustafson E."/>
            <person name="Cahill P."/>
            <person name="Kana A."/>
            <person name="Doucette-Stamm L."/>
            <person name="Weinstock K."/>
            <person name="Fechtel K."/>
            <person name="Weiss R.B."/>
            <person name="Dunn D.M."/>
            <person name="Green E.D."/>
            <person name="Blakesley R.W."/>
            <person name="Bouffard G.G."/>
            <person name="De Jong P.J."/>
            <person name="Osoegawa K."/>
            <person name="Zhu B."/>
            <person name="Marra M."/>
            <person name="Schein J."/>
            <person name="Bosdet I."/>
            <person name="Fjell C."/>
            <person name="Jones S."/>
            <person name="Krzywinski M."/>
            <person name="Mathewson C."/>
            <person name="Siddiqui A."/>
            <person name="Wye N."/>
            <person name="McPherson J."/>
            <person name="Zhao S."/>
            <person name="Fraser C.M."/>
            <person name="Shetty J."/>
            <person name="Shatsman S."/>
            <person name="Geer K."/>
            <person name="Chen Y."/>
            <person name="Abramzon S."/>
            <person name="Nierman W.C."/>
            <person name="Havlak P.H."/>
            <person name="Chen R."/>
            <person name="Durbin K.J."/>
            <person name="Egan A."/>
            <person name="Ren Y."/>
            <person name="Song X.-Z."/>
            <person name="Li B."/>
            <person name="Liu Y."/>
            <person name="Qin X."/>
            <person name="Cawley S."/>
            <person name="Cooney A.J."/>
            <person name="D'Souza L.M."/>
            <person name="Martin K."/>
            <person name="Wu J.Q."/>
            <person name="Gonzalez-Garay M.L."/>
            <person name="Jackson A.R."/>
            <person name="Kalafus K.J."/>
            <person name="McLeod M.P."/>
            <person name="Milosavljevic A."/>
            <person name="Virk D."/>
            <person name="Volkov A."/>
            <person name="Wheeler D.A."/>
            <person name="Zhang Z."/>
            <person name="Bailey J.A."/>
            <person name="Eichler E.E."/>
            <person name="Tuzun E."/>
            <person name="Birney E."/>
            <person name="Mongin E."/>
            <person name="Ureta-Vidal A."/>
            <person name="Woodwark C."/>
            <person name="Zdobnov E."/>
            <person name="Bork P."/>
            <person name="Suyama M."/>
            <person name="Torrents D."/>
            <person name="Alexandersson M."/>
            <person name="Trask B.J."/>
            <person name="Young J.M."/>
            <person name="Huang H."/>
            <person name="Wang H."/>
            <person name="Xing H."/>
            <person name="Daniels S."/>
            <person name="Gietzen D."/>
            <person name="Schmidt J."/>
            <person name="Stevens K."/>
            <person name="Vitt U."/>
            <person name="Wingrove J."/>
            <person name="Camara F."/>
            <person name="Mar Alba M."/>
            <person name="Abril J.F."/>
            <person name="Guigo R."/>
            <person name="Smit A."/>
            <person name="Dubchak I."/>
            <person name="Rubin E.M."/>
            <person name="Couronne O."/>
            <person name="Poliakov A."/>
            <person name="Huebner N."/>
            <person name="Ganten D."/>
            <person name="Goesele C."/>
            <person name="Hummel O."/>
            <person name="Kreitler T."/>
            <person name="Lee Y.-A."/>
            <person name="Monti J."/>
            <person name="Schulz H."/>
            <person name="Zimdahl H."/>
            <person name="Himmelbauer H."/>
            <person name="Lehrach H."/>
            <person name="Jacob H.J."/>
            <person name="Bromberg S."/>
            <person name="Gullings-Handley J."/>
            <person name="Jensen-Seaman M.I."/>
            <person name="Kwitek A.E."/>
            <person name="Lazar J."/>
            <person name="Pasko D."/>
            <person name="Tonellato P.J."/>
            <person name="Twigger S."/>
            <person name="Ponting C.P."/>
            <person name="Duarte J.M."/>
            <person name="Rice S."/>
            <person name="Goodstadt L."/>
            <person name="Beatson S.A."/>
            <person name="Emes R.D."/>
            <person name="Winter E.E."/>
            <person name="Webber C."/>
            <person name="Brandt P."/>
            <person name="Nyakatura G."/>
            <person name="Adetobi M."/>
            <person name="Chiaromonte F."/>
            <person name="Elnitski L."/>
            <person name="Eswara P."/>
            <person name="Hardison R.C."/>
            <person name="Hou M."/>
            <person name="Kolbe D."/>
            <person name="Makova K."/>
            <person name="Miller W."/>
            <person name="Nekrutenko A."/>
            <person name="Riemer C."/>
            <person name="Schwartz S."/>
            <person name="Taylor J."/>
            <person name="Yang S."/>
            <person name="Zhang Y."/>
            <person name="Lindpaintner K."/>
            <person name="Andrews T.D."/>
            <person name="Caccamo M."/>
            <person name="Clamp M."/>
            <person name="Clarke L."/>
            <person name="Curwen V."/>
            <person name="Durbin R.M."/>
            <person name="Eyras E."/>
            <person name="Searle S.M."/>
            <person name="Cooper G.M."/>
            <person name="Batzoglou S."/>
            <person name="Brudno M."/>
            <person name="Sidow A."/>
            <person name="Stone E.A."/>
            <person name="Payseur B.A."/>
            <person name="Bourque G."/>
            <person name="Lopez-Otin C."/>
            <person name="Puente X.S."/>
            <person name="Chakrabarti K."/>
            <person name="Chatterji S."/>
            <person name="Dewey C."/>
            <person name="Pachter L."/>
            <person name="Bray N."/>
            <person name="Yap V.B."/>
            <person name="Caspi A."/>
            <person name="Tesler G."/>
            <person name="Pevzner P.A."/>
            <person name="Haussler D."/>
            <person name="Roskin K.M."/>
            <person name="Baertsch R."/>
            <person name="Clawson H."/>
            <person name="Furey T.S."/>
            <person name="Hinrichs A.S."/>
            <person name="Karolchik D."/>
            <person name="Kent W.J."/>
            <person name="Rosenbloom K.R."/>
            <person name="Trumbower H."/>
            <person name="Weirauch M."/>
            <person name="Cooper D.N."/>
            <person name="Stenson P.D."/>
            <person name="Ma B."/>
            <person name="Brent M."/>
            <person name="Arumugam M."/>
            <person name="Shteynberg D."/>
            <person name="Copley R.R."/>
            <person name="Taylor M.S."/>
            <person name="Riethman H."/>
            <person name="Mudunuri U."/>
            <person name="Peterson J."/>
            <person name="Guyer M."/>
            <person name="Felsenfeld A."/>
            <person name="Old S."/>
            <person name="Mockrin S."/>
            <person name="Collins F.S."/>
        </authorList>
    </citation>
    <scope>NUCLEOTIDE SEQUENCE [LARGE SCALE GENOMIC DNA]</scope>
    <scope>TISSUE SPECIFICITY</scope>
    <source>
        <strain>Brown Norway</strain>
    </source>
</reference>
<reference key="2">
    <citation type="journal article" date="2005" name="Biochim. Biophys. Acta">
        <title>The mammalian gene pecanex 1 is differentially expressed during spermatogenesis.</title>
        <authorList>
            <person name="Geisinger A."/>
            <person name="Alsheimer M."/>
            <person name="Baier A."/>
            <person name="Benavente R."/>
            <person name="Wettstein R."/>
        </authorList>
    </citation>
    <scope>TISSUE SPECIFICITY</scope>
</reference>
<accession>E9PSU6</accession>
<evidence type="ECO:0000255" key="1"/>
<evidence type="ECO:0000256" key="2">
    <source>
        <dbReference type="SAM" id="MobiDB-lite"/>
    </source>
</evidence>
<evidence type="ECO:0000269" key="3">
    <source>
    </source>
</evidence>
<evidence type="ECO:0000303" key="4">
    <source>
    </source>
</evidence>
<evidence type="ECO:0000305" key="5"/>
<evidence type="ECO:0000312" key="6">
    <source>
        <dbReference type="RGD" id="1306115"/>
    </source>
</evidence>
<keyword id="KW-0472">Membrane</keyword>
<keyword id="KW-1185">Reference proteome</keyword>
<keyword id="KW-0812">Transmembrane</keyword>
<keyword id="KW-1133">Transmembrane helix</keyword>
<feature type="chain" id="PRO_0000442941" description="Pecanex-like protein 1">
    <location>
        <begin position="1"/>
        <end position="2343"/>
    </location>
</feature>
<feature type="transmembrane region" description="Helical" evidence="1">
    <location>
        <begin position="33"/>
        <end position="53"/>
    </location>
</feature>
<feature type="transmembrane region" description="Helical" evidence="1">
    <location>
        <begin position="57"/>
        <end position="77"/>
    </location>
</feature>
<feature type="transmembrane region" description="Helical" evidence="1">
    <location>
        <begin position="978"/>
        <end position="998"/>
    </location>
</feature>
<feature type="transmembrane region" description="Helical" evidence="1">
    <location>
        <begin position="1009"/>
        <end position="1029"/>
    </location>
</feature>
<feature type="transmembrane region" description="Helical" evidence="1">
    <location>
        <begin position="1034"/>
        <end position="1054"/>
    </location>
</feature>
<feature type="transmembrane region" description="Helical" evidence="1">
    <location>
        <begin position="1068"/>
        <end position="1088"/>
    </location>
</feature>
<feature type="transmembrane region" description="Helical" evidence="1">
    <location>
        <begin position="1118"/>
        <end position="1138"/>
    </location>
</feature>
<feature type="transmembrane region" description="Helical" evidence="1">
    <location>
        <begin position="1162"/>
        <end position="1182"/>
    </location>
</feature>
<feature type="transmembrane region" description="Helical" evidence="1">
    <location>
        <begin position="1195"/>
        <end position="1215"/>
    </location>
</feature>
<feature type="transmembrane region" description="Helical" evidence="1">
    <location>
        <begin position="1268"/>
        <end position="1288"/>
    </location>
</feature>
<feature type="transmembrane region" description="Helical" evidence="1">
    <location>
        <begin position="1296"/>
        <end position="1316"/>
    </location>
</feature>
<feature type="transmembrane region" description="Helical" evidence="1">
    <location>
        <begin position="1406"/>
        <end position="1426"/>
    </location>
</feature>
<feature type="transmembrane region" description="Helical" evidence="1">
    <location>
        <begin position="1434"/>
        <end position="1454"/>
    </location>
</feature>
<feature type="transmembrane region" description="Helical" evidence="1">
    <location>
        <begin position="1458"/>
        <end position="1478"/>
    </location>
</feature>
<feature type="transmembrane region" description="Helical" evidence="1">
    <location>
        <begin position="1493"/>
        <end position="1513"/>
    </location>
</feature>
<feature type="region of interest" description="Disordered" evidence="2">
    <location>
        <begin position="98"/>
        <end position="163"/>
    </location>
</feature>
<feature type="region of interest" description="Disordered" evidence="2">
    <location>
        <begin position="271"/>
        <end position="290"/>
    </location>
</feature>
<feature type="region of interest" description="Disordered" evidence="2">
    <location>
        <begin position="306"/>
        <end position="691"/>
    </location>
</feature>
<feature type="region of interest" description="Disordered" evidence="2">
    <location>
        <begin position="749"/>
        <end position="826"/>
    </location>
</feature>
<feature type="region of interest" description="Disordered" evidence="2">
    <location>
        <begin position="2050"/>
        <end position="2120"/>
    </location>
</feature>
<feature type="compositionally biased region" description="Polar residues" evidence="2">
    <location>
        <begin position="143"/>
        <end position="163"/>
    </location>
</feature>
<feature type="compositionally biased region" description="Basic residues" evidence="2">
    <location>
        <begin position="272"/>
        <end position="282"/>
    </location>
</feature>
<feature type="compositionally biased region" description="Low complexity" evidence="2">
    <location>
        <begin position="372"/>
        <end position="390"/>
    </location>
</feature>
<feature type="compositionally biased region" description="Polar residues" evidence="2">
    <location>
        <begin position="396"/>
        <end position="412"/>
    </location>
</feature>
<feature type="compositionally biased region" description="Basic and acidic residues" evidence="2">
    <location>
        <begin position="416"/>
        <end position="457"/>
    </location>
</feature>
<feature type="compositionally biased region" description="Basic and acidic residues" evidence="2">
    <location>
        <begin position="507"/>
        <end position="521"/>
    </location>
</feature>
<feature type="compositionally biased region" description="Basic and acidic residues" evidence="2">
    <location>
        <begin position="530"/>
        <end position="546"/>
    </location>
</feature>
<feature type="compositionally biased region" description="Basic residues" evidence="2">
    <location>
        <begin position="556"/>
        <end position="571"/>
    </location>
</feature>
<feature type="compositionally biased region" description="Low complexity" evidence="2">
    <location>
        <begin position="624"/>
        <end position="637"/>
    </location>
</feature>
<feature type="compositionally biased region" description="Low complexity" evidence="2">
    <location>
        <begin position="769"/>
        <end position="780"/>
    </location>
</feature>
<feature type="compositionally biased region" description="Low complexity" evidence="2">
    <location>
        <begin position="809"/>
        <end position="826"/>
    </location>
</feature>
<feature type="compositionally biased region" description="Polar residues" evidence="2">
    <location>
        <begin position="2060"/>
        <end position="2080"/>
    </location>
</feature>
<feature type="compositionally biased region" description="Polar residues" evidence="2">
    <location>
        <begin position="2094"/>
        <end position="2117"/>
    </location>
</feature>
<comment type="subcellular location">
    <subcellularLocation>
        <location evidence="5">Membrane</location>
        <topology evidence="1">Multi-pass membrane protein</topology>
    </subcellularLocation>
</comment>
<comment type="tissue specificity">
    <text evidence="3">Specifically expressed in the germ line and not in the somatic cells of the testis, reaching its peak at the pachytene stage of the meiotic prophase. Detected in pachytene spermatocytes and round spermatids (at protein level).</text>
</comment>
<comment type="similarity">
    <text evidence="5">Belongs to the pecanex family.</text>
</comment>
<sequence>MGSQTLQILRQGVWAALSGGWYYDPHQATFVNALHLYLWLFLLGLPFTLYMALPSSMIIVAVYCPVVAAVFIVLKMVNYRLHRALDAGEVVDRSANEFTDQRAKAEQGNCSTRRKDSNGPSDPGGGIEMSEFIREATPPVGCSSRNSYAGLDPSNQIGSGSSRLGTAATIKGDTDTAKTSDDISLSLGQSSSLCKEGSEEQDLATDRKLFRLVSNDSFVSIQPSLSSCGQDLPRDFSDKVSLPSHSQHHRVDQSLCSACDTEVASLVPLHSHSYRKEHRPRGVPRTSSSAVAFPDASLSGLPLYQQQQRRGLDPVTELDSSKPHSGTRESLVGQSCPLAQSQPAADRRKSYSQPPTKCGKSRALNAEKSVDSLRSLSTRSSGSTESYCSGTDRDTNSTLSSYKSEQTSSTHIESILSEHDESPKVGDKSARKEGCAESAEERCHGATDRRTSSDKTALEGSTPAGPPEAPDAQASEEKPDQVAPSSSASEDANKNPHANEFTVPGDRPPEQSAESKEEQGEKPSLSTDSKVCKDDGGKQKEGDVRPKSSSLIHRTTSAHKPGRRRTGKKRASSFDSSRHRDYVSFRGVSGTKPHSAIFCHDEDSSDQSDLSRAPSVHSAHHFSSDSSSSATSHSCQSPEGKYSALKTKHGHKDRGTDSDHTHRAHPGPEGTAKKRASRRTSSTHSAKTRARVLSLDSGTVACLNDSNRLLAPDSIKPLTTSKSDLEAKEGEVLDELSLLGRASQLETVTRSRNSLPSQVAFPEGEEQDAATGAAQASEEAVAFRRERSTFRRQAVRRRHNAGSNPTPPTLLIGPPLSLQDGQQGQQSTAQVKVQSRPPSQAAVLSASASLLVRKGSVHLDASHDHASAVGGSSLHDELGKFSSTLYETGGCDMSLVNFEPAARRASNICDTDSHVSSSTSVRFYPHDMLSLPQIRLNRLLTIDTDLLEQQDIDLSPDLAATYGPTEEAAQKVKHYYRFWILPQLWIGINFDRLTLLALFDRNREILENILAVVLAILVAFLGSILLIQGFFRDIWVFQFCLVIASCQYSLLKSVQPDSSSPRHGHNRIIAYSRPVYFCLCCGLIWLLDYGSRNLSTSKFKLYGITFTNPLVLLSARDLVIVFTLCFPIVFFIGLLPQVNTFVMYLCEQLDIHIFGGNATTSLLAALYSFLCSVVAVALLYGLCYGALRDSWDGQHIPVLFSVFCGLLVAVSYHLSRQSSDPSVLFSLIQSKIFPKTDEKNPEDPLSEVKDPLPEKLSNSVSERLQSDLVVCVVIGVLYFAIHVSTVFTALQPALKYVLYALVGFVGLVTHYVLPQVRKQLPWHCFSRPLLKTAEHNQYEVRNAATMMWFEKLHVWLLFVEKNVIYPLIVLNELSSSADTIASPKKLDTELGALMITVAGLKLLRSSFSSPTYQYITVIFTVLFFKFDYEAFSETMLLDLFFMSILFSKLWELLYKLQFVYTYVAPWQITWGSAFHAFAQPFAVPHSAMLFVQAVVSALFSTPLNPFLGSAIFITSYVRPVKFWERDYNTKRVDHSNTRLASQLDRNPGSDDNNLNSIFYEHLTRSLQHSLCGDLLLGRWGNYSTGDCFILASDYLNALVHLIETGNGLVTFQLRGLEFRGTYCQQREVEAITEGVEEDEGFCCCEPGHVPHVLSFNAAFGQRWLAWEVVVTKYILEGYSITDNSAASMLQVFDLRRVLTTYYVKGIIYYVTTSSKLEEWLANETMQEGLRLCADRNYVDVDPTFNPNIDEDYDHRLAGISRESFCVIYLNWIEYCSSRRAKPLDVDKDSSLVTLCYGLCVLGRRALGTASHHMSSNLESFLYGLHALFKGDFRISSVRDEWIFADMELLRKVVVPGIRMSIKLHQDHFTSPDEYDDPTVLYEAIVSHEKNLVIAHEGDPAWRSAVLANSPSLLALRHVMDDGTNEYKIIMLNRRYLSFRVIKVNKECVRGLWAGQQQELVFLRNRNPERGSIQNAKQALRNMINSSCDQPIGYPIFVSPLTTSYSDSHDQLKEILGGPISLGNIRDFIVSTWHRLRKGCGAGCNSGGNIEDSDTGGGTSCPANSATTASDPHNSVPQGSTGHPGQGAGSGLHPPTTSYPPTLGTSHSAHSVQSSLVRQSPARASMASQSSYCYGSRHSSLRMSTTGFVPCRRSSTSQISLRNLPSSIQSRLSMVNQMEAASQGGMGCVQHGLPSSSSSSQSIPACKHHTLVAFLGAEGSQSGATEAQPGNTSSPATISHARKGEVVYRVQIVDLSQILEGINVSKRKELQWPDEGIRLKAGRNSWKDWSPQEGMEGHVVHRWVPCSRDPSTRSHIDKTVLLVQIDDKYVTVIETGVLELGAEV</sequence>
<organism>
    <name type="scientific">Rattus norvegicus</name>
    <name type="common">Rat</name>
    <dbReference type="NCBI Taxonomy" id="10116"/>
    <lineage>
        <taxon>Eukaryota</taxon>
        <taxon>Metazoa</taxon>
        <taxon>Chordata</taxon>
        <taxon>Craniata</taxon>
        <taxon>Vertebrata</taxon>
        <taxon>Euteleostomi</taxon>
        <taxon>Mammalia</taxon>
        <taxon>Eutheria</taxon>
        <taxon>Euarchontoglires</taxon>
        <taxon>Glires</taxon>
        <taxon>Rodentia</taxon>
        <taxon>Myomorpha</taxon>
        <taxon>Muroidea</taxon>
        <taxon>Muridae</taxon>
        <taxon>Murinae</taxon>
        <taxon>Rattus</taxon>
    </lineage>
</organism>
<protein>
    <recommendedName>
        <fullName>Pecanex-like protein 1</fullName>
    </recommendedName>
    <alternativeName>
        <fullName evidence="4">Pecanex 1</fullName>
    </alternativeName>
    <alternativeName>
        <fullName>Pecanex homolog protein 1</fullName>
    </alternativeName>
</protein>
<dbReference type="EMBL" id="AABR07065047">
    <property type="status" value="NOT_ANNOTATED_CDS"/>
    <property type="molecule type" value="Genomic_DNA"/>
</dbReference>
<dbReference type="RefSeq" id="NP_001163818.1">
    <property type="nucleotide sequence ID" value="NM_001170347.1"/>
</dbReference>
<dbReference type="FunCoup" id="E9PSU6">
    <property type="interactions" value="4021"/>
</dbReference>
<dbReference type="STRING" id="10116.ENSRNOP00000010022"/>
<dbReference type="GlyGen" id="E9PSU6">
    <property type="glycosylation" value="1 site"/>
</dbReference>
<dbReference type="PhosphoSitePlus" id="E9PSU6"/>
<dbReference type="PaxDb" id="10116-ENSRNOP00000010022"/>
<dbReference type="Ensembl" id="ENSRNOT00000010022.7">
    <property type="protein sequence ID" value="ENSRNOP00000010022.5"/>
    <property type="gene ID" value="ENSRNOG00000007459.7"/>
</dbReference>
<dbReference type="GeneID" id="314288"/>
<dbReference type="KEGG" id="rno:314288"/>
<dbReference type="AGR" id="RGD:1306115"/>
<dbReference type="CTD" id="22990"/>
<dbReference type="RGD" id="1306115">
    <property type="gene designation" value="Pcnx1"/>
</dbReference>
<dbReference type="eggNOG" id="KOG3604">
    <property type="taxonomic scope" value="Eukaryota"/>
</dbReference>
<dbReference type="GeneTree" id="ENSGT00940000157417"/>
<dbReference type="HOGENOM" id="CLU_000602_0_1_1"/>
<dbReference type="InParanoid" id="E9PSU6"/>
<dbReference type="OMA" id="ELXDTDS"/>
<dbReference type="OrthoDB" id="10037631at2759"/>
<dbReference type="PhylomeDB" id="E9PSU6"/>
<dbReference type="TreeFam" id="TF313570"/>
<dbReference type="PRO" id="PR:E9PSU6"/>
<dbReference type="Proteomes" id="UP000002494">
    <property type="component" value="Chromosome 6"/>
</dbReference>
<dbReference type="Bgee" id="ENSRNOG00000007459">
    <property type="expression patterns" value="Expressed in skeletal muscle tissue and 19 other cell types or tissues"/>
</dbReference>
<dbReference type="GO" id="GO:0016020">
    <property type="term" value="C:membrane"/>
    <property type="evidence" value="ECO:0007669"/>
    <property type="project" value="UniProtKB-SubCell"/>
</dbReference>
<dbReference type="InterPro" id="IPR039797">
    <property type="entry name" value="Pecanex"/>
</dbReference>
<dbReference type="InterPro" id="IPR007735">
    <property type="entry name" value="Pecanex_C"/>
</dbReference>
<dbReference type="PANTHER" id="PTHR12372">
    <property type="entry name" value="PECANEX"/>
    <property type="match status" value="1"/>
</dbReference>
<dbReference type="PANTHER" id="PTHR12372:SF2">
    <property type="entry name" value="PECANEX-LIKE PROTEIN 1"/>
    <property type="match status" value="1"/>
</dbReference>
<dbReference type="Pfam" id="PF05041">
    <property type="entry name" value="Pecanex_C"/>
    <property type="match status" value="1"/>
</dbReference>
<gene>
    <name evidence="6" type="primary">Pcnx1</name>
    <name type="synonym">Pcnx</name>
</gene>
<name>PCX1_RAT</name>